<protein>
    <recommendedName>
        <fullName>Maltose fermentation regulatory protein YPR196W</fullName>
    </recommendedName>
</protein>
<reference key="1">
    <citation type="journal article" date="1997" name="Nature">
        <title>The nucleotide sequence of Saccharomyces cerevisiae chromosome XVI.</title>
        <authorList>
            <person name="Bussey H."/>
            <person name="Storms R.K."/>
            <person name="Ahmed A."/>
            <person name="Albermann K."/>
            <person name="Allen E."/>
            <person name="Ansorge W."/>
            <person name="Araujo R."/>
            <person name="Aparicio A."/>
            <person name="Barrell B.G."/>
            <person name="Badcock K."/>
            <person name="Benes V."/>
            <person name="Botstein D."/>
            <person name="Bowman S."/>
            <person name="Brueckner M."/>
            <person name="Carpenter J."/>
            <person name="Cherry J.M."/>
            <person name="Chung E."/>
            <person name="Churcher C.M."/>
            <person name="Coster F."/>
            <person name="Davis K."/>
            <person name="Davis R.W."/>
            <person name="Dietrich F.S."/>
            <person name="Delius H."/>
            <person name="DiPaolo T."/>
            <person name="Dubois E."/>
            <person name="Duesterhoeft A."/>
            <person name="Duncan M."/>
            <person name="Floeth M."/>
            <person name="Fortin N."/>
            <person name="Friesen J.D."/>
            <person name="Fritz C."/>
            <person name="Goffeau A."/>
            <person name="Hall J."/>
            <person name="Hebling U."/>
            <person name="Heumann K."/>
            <person name="Hilbert H."/>
            <person name="Hillier L.W."/>
            <person name="Hunicke-Smith S."/>
            <person name="Hyman R.W."/>
            <person name="Johnston M."/>
            <person name="Kalman S."/>
            <person name="Kleine K."/>
            <person name="Komp C."/>
            <person name="Kurdi O."/>
            <person name="Lashkari D."/>
            <person name="Lew H."/>
            <person name="Lin A."/>
            <person name="Lin D."/>
            <person name="Louis E.J."/>
            <person name="Marathe R."/>
            <person name="Messenguy F."/>
            <person name="Mewes H.-W."/>
            <person name="Mirtipati S."/>
            <person name="Moestl D."/>
            <person name="Mueller-Auer S."/>
            <person name="Namath A."/>
            <person name="Nentwich U."/>
            <person name="Oefner P."/>
            <person name="Pearson D."/>
            <person name="Petel F.X."/>
            <person name="Pohl T.M."/>
            <person name="Purnelle B."/>
            <person name="Rajandream M.A."/>
            <person name="Rechmann S."/>
            <person name="Rieger M."/>
            <person name="Riles L."/>
            <person name="Roberts D."/>
            <person name="Schaefer M."/>
            <person name="Scharfe M."/>
            <person name="Scherens B."/>
            <person name="Schramm S."/>
            <person name="Schroeder M."/>
            <person name="Sdicu A.-M."/>
            <person name="Tettelin H."/>
            <person name="Urrestarazu L.A."/>
            <person name="Ushinsky S."/>
            <person name="Vierendeels F."/>
            <person name="Vissers S."/>
            <person name="Voss H."/>
            <person name="Walsh S.V."/>
            <person name="Wambutt R."/>
            <person name="Wang Y."/>
            <person name="Wedler E."/>
            <person name="Wedler H."/>
            <person name="Winnett E."/>
            <person name="Zhong W.-W."/>
            <person name="Zollner A."/>
            <person name="Vo D.H."/>
            <person name="Hani J."/>
        </authorList>
    </citation>
    <scope>NUCLEOTIDE SEQUENCE [LARGE SCALE GENOMIC DNA]</scope>
    <source>
        <strain>ATCC 204508 / S288c</strain>
    </source>
</reference>
<reference key="2">
    <citation type="journal article" date="2014" name="G3 (Bethesda)">
        <title>The reference genome sequence of Saccharomyces cerevisiae: Then and now.</title>
        <authorList>
            <person name="Engel S.R."/>
            <person name="Dietrich F.S."/>
            <person name="Fisk D.G."/>
            <person name="Binkley G."/>
            <person name="Balakrishnan R."/>
            <person name="Costanzo M.C."/>
            <person name="Dwight S.S."/>
            <person name="Hitz B.C."/>
            <person name="Karra K."/>
            <person name="Nash R.S."/>
            <person name="Weng S."/>
            <person name="Wong E.D."/>
            <person name="Lloyd P."/>
            <person name="Skrzypek M.S."/>
            <person name="Miyasato S.R."/>
            <person name="Simison M."/>
            <person name="Cherry J.M."/>
        </authorList>
    </citation>
    <scope>GENOME REANNOTATION</scope>
    <source>
        <strain>ATCC 204508 / S288c</strain>
    </source>
</reference>
<reference key="3">
    <citation type="journal article" date="2007" name="Genome Res.">
        <title>Approaching a complete repository of sequence-verified protein-encoding clones for Saccharomyces cerevisiae.</title>
        <authorList>
            <person name="Hu Y."/>
            <person name="Rolfs A."/>
            <person name="Bhullar B."/>
            <person name="Murthy T.V.S."/>
            <person name="Zhu C."/>
            <person name="Berger M.F."/>
            <person name="Camargo A.A."/>
            <person name="Kelley F."/>
            <person name="McCarron S."/>
            <person name="Jepson D."/>
            <person name="Richardson A."/>
            <person name="Raphael J."/>
            <person name="Moreira D."/>
            <person name="Taycher E."/>
            <person name="Zuo D."/>
            <person name="Mohr S."/>
            <person name="Kane M.F."/>
            <person name="Williamson J."/>
            <person name="Simpson A.J.G."/>
            <person name="Bulyk M.L."/>
            <person name="Harlow E."/>
            <person name="Marsischky G."/>
            <person name="Kolodner R.D."/>
            <person name="LaBaer J."/>
        </authorList>
    </citation>
    <scope>NUCLEOTIDE SEQUENCE [GENOMIC DNA]</scope>
    <source>
        <strain>ATCC 204508 / S288c</strain>
    </source>
</reference>
<evidence type="ECO:0000250" key="1"/>
<evidence type="ECO:0000255" key="2"/>
<evidence type="ECO:0000255" key="3">
    <source>
        <dbReference type="PROSITE-ProRule" id="PRU00227"/>
    </source>
</evidence>
<evidence type="ECO:0000305" key="4"/>
<name>YP196_YEAST</name>
<organism>
    <name type="scientific">Saccharomyces cerevisiae (strain ATCC 204508 / S288c)</name>
    <name type="common">Baker's yeast</name>
    <dbReference type="NCBI Taxonomy" id="559292"/>
    <lineage>
        <taxon>Eukaryota</taxon>
        <taxon>Fungi</taxon>
        <taxon>Dikarya</taxon>
        <taxon>Ascomycota</taxon>
        <taxon>Saccharomycotina</taxon>
        <taxon>Saccharomycetes</taxon>
        <taxon>Saccharomycetales</taxon>
        <taxon>Saccharomycetaceae</taxon>
        <taxon>Saccharomyces</taxon>
    </lineage>
</organism>
<dbReference type="EMBL" id="U25841">
    <property type="protein sequence ID" value="AAB64625.1"/>
    <property type="molecule type" value="Genomic_DNA"/>
</dbReference>
<dbReference type="EMBL" id="AY558071">
    <property type="protein sequence ID" value="AAS56397.1"/>
    <property type="molecule type" value="Genomic_DNA"/>
</dbReference>
<dbReference type="EMBL" id="BK006949">
    <property type="protein sequence ID" value="DAA11611.1"/>
    <property type="molecule type" value="Genomic_DNA"/>
</dbReference>
<dbReference type="PIR" id="S58826">
    <property type="entry name" value="S58826"/>
</dbReference>
<dbReference type="RefSeq" id="NP_015522.1">
    <property type="nucleotide sequence ID" value="NM_001184293.1"/>
</dbReference>
<dbReference type="BioGRID" id="36367">
    <property type="interactions" value="15"/>
</dbReference>
<dbReference type="FunCoup" id="Q06595">
    <property type="interactions" value="230"/>
</dbReference>
<dbReference type="IntAct" id="Q06595">
    <property type="interactions" value="1"/>
</dbReference>
<dbReference type="STRING" id="4932.YPR196W"/>
<dbReference type="iPTMnet" id="Q06595"/>
<dbReference type="PaxDb" id="4932-YPR196W"/>
<dbReference type="PeptideAtlas" id="Q06595"/>
<dbReference type="EnsemblFungi" id="YPR196W_mRNA">
    <property type="protein sequence ID" value="YPR196W"/>
    <property type="gene ID" value="YPR196W"/>
</dbReference>
<dbReference type="GeneID" id="856326"/>
<dbReference type="KEGG" id="sce:YPR196W"/>
<dbReference type="AGR" id="SGD:S000006400"/>
<dbReference type="SGD" id="S000006400">
    <property type="gene designation" value="YPR196W"/>
</dbReference>
<dbReference type="VEuPathDB" id="FungiDB:YPR196W"/>
<dbReference type="eggNOG" id="ENOG502S2FW">
    <property type="taxonomic scope" value="Eukaryota"/>
</dbReference>
<dbReference type="GeneTree" id="ENSGT00940000176316"/>
<dbReference type="HOGENOM" id="CLU_046324_0_0_1"/>
<dbReference type="InParanoid" id="Q06595"/>
<dbReference type="OMA" id="QRADITM"/>
<dbReference type="OrthoDB" id="2740448at2759"/>
<dbReference type="BioCyc" id="YEAST:G3O-34317-MONOMER"/>
<dbReference type="BioGRID-ORCS" id="856326">
    <property type="hits" value="2 hits in 13 CRISPR screens"/>
</dbReference>
<dbReference type="PRO" id="PR:Q06595"/>
<dbReference type="Proteomes" id="UP000002311">
    <property type="component" value="Chromosome XVI"/>
</dbReference>
<dbReference type="RNAct" id="Q06595">
    <property type="molecule type" value="protein"/>
</dbReference>
<dbReference type="GO" id="GO:0005634">
    <property type="term" value="C:nucleus"/>
    <property type="evidence" value="ECO:0007669"/>
    <property type="project" value="UniProtKB-SubCell"/>
</dbReference>
<dbReference type="GO" id="GO:0000981">
    <property type="term" value="F:DNA-binding transcription factor activity, RNA polymerase II-specific"/>
    <property type="evidence" value="ECO:0007669"/>
    <property type="project" value="InterPro"/>
</dbReference>
<dbReference type="GO" id="GO:0043565">
    <property type="term" value="F:sequence-specific DNA binding"/>
    <property type="evidence" value="ECO:0007005"/>
    <property type="project" value="SGD"/>
</dbReference>
<dbReference type="GO" id="GO:0008270">
    <property type="term" value="F:zinc ion binding"/>
    <property type="evidence" value="ECO:0007669"/>
    <property type="project" value="InterPro"/>
</dbReference>
<dbReference type="GO" id="GO:0006355">
    <property type="term" value="P:regulation of DNA-templated transcription"/>
    <property type="evidence" value="ECO:0000247"/>
    <property type="project" value="SGD"/>
</dbReference>
<dbReference type="CDD" id="cd12148">
    <property type="entry name" value="fungal_TF_MHR"/>
    <property type="match status" value="1"/>
</dbReference>
<dbReference type="CDD" id="cd00067">
    <property type="entry name" value="GAL4"/>
    <property type="match status" value="1"/>
</dbReference>
<dbReference type="FunFam" id="4.10.240.10:FF:000020">
    <property type="entry name" value="Maltose activator protein"/>
    <property type="match status" value="1"/>
</dbReference>
<dbReference type="Gene3D" id="4.10.240.10">
    <property type="entry name" value="Zn(2)-C6 fungal-type DNA-binding domain"/>
    <property type="match status" value="1"/>
</dbReference>
<dbReference type="InterPro" id="IPR050797">
    <property type="entry name" value="Carb_Metab_Trans_Reg"/>
</dbReference>
<dbReference type="InterPro" id="IPR020448">
    <property type="entry name" value="Maltose_ferment_reg_DNA-bd"/>
</dbReference>
<dbReference type="InterPro" id="IPR036864">
    <property type="entry name" value="Zn2-C6_fun-type_DNA-bd_sf"/>
</dbReference>
<dbReference type="InterPro" id="IPR001138">
    <property type="entry name" value="Zn2Cys6_DnaBD"/>
</dbReference>
<dbReference type="PANTHER" id="PTHR31668">
    <property type="entry name" value="GLUCOSE TRANSPORT TRANSCRIPTION REGULATOR RGT1-RELATED-RELATED"/>
    <property type="match status" value="1"/>
</dbReference>
<dbReference type="PANTHER" id="PTHR31668:SF18">
    <property type="entry name" value="MALTOSE FERMENTATION REGULATORY PROTEIN MAL13-RELATED"/>
    <property type="match status" value="1"/>
</dbReference>
<dbReference type="Pfam" id="PF00172">
    <property type="entry name" value="Zn_clus"/>
    <property type="match status" value="1"/>
</dbReference>
<dbReference type="PRINTS" id="PR00054">
    <property type="entry name" value="FUNGALZNCYS"/>
</dbReference>
<dbReference type="SMART" id="SM00066">
    <property type="entry name" value="GAL4"/>
    <property type="match status" value="1"/>
</dbReference>
<dbReference type="SUPFAM" id="SSF57701">
    <property type="entry name" value="Zn2/Cys6 DNA-binding domain"/>
    <property type="match status" value="1"/>
</dbReference>
<dbReference type="PROSITE" id="PS00463">
    <property type="entry name" value="ZN2_CY6_FUNGAL_1"/>
    <property type="match status" value="1"/>
</dbReference>
<dbReference type="PROSITE" id="PS50048">
    <property type="entry name" value="ZN2_CY6_FUNGAL_2"/>
    <property type="match status" value="1"/>
</dbReference>
<proteinExistence type="inferred from homology"/>
<comment type="function">
    <text evidence="1">May regulate the transcription of maltase and maltose permease genes.</text>
</comment>
<comment type="subcellular location">
    <subcellularLocation>
        <location evidence="3">Nucleus</location>
    </subcellularLocation>
</comment>
<comment type="similarity">
    <text evidence="4">Belongs to the MAL13 family.</text>
</comment>
<comment type="caution">
    <text evidence="4">The gene is not associated with corresponding maltase and maltose permease genes on chromosome 16 as it is the case for the other functional maltose fermentation loci, so its transcription regulation activity is speculative.</text>
</comment>
<accession>Q06595</accession>
<accession>D6W4J5</accession>
<gene>
    <name type="ordered locus">YPR196W</name>
    <name type="ORF">P9677.4</name>
</gene>
<sequence length="470" mass="55077">MSIVRQSCDCCRVRRVKCDRNRPCDRCRQRNLRCTYLQPLRKRGPKSIGESNLERAAEIQMVTVNNNIMAAPVMYKKVPKKVIDQCLRLYHDQLYVIWPMLSYDDLYKLLEENYEDCSTYWFLVSLSAATLSDLHTKIEYKKGFFFAGEQLCNLCMSSRRFFDDLSNSDIFRIMTYYCLHRCYAQFADTRTSYRLSCEAIGLIKIAGFHREETYEFLPFGEQQLIRKVYYLLLMTERYYAVYIKCVTSLDTTISPPQPEIVTDSRLSLDSFLEVIKVFTVPGKYFYDALATNSVNGSYTEDSLKRIWNELHISSLDIEPYSYGYIDYLFSRHWVRTLAWKLVLNKKDMRMNFFSNTNATHIPVEIAKDMLQDTLLTPIDLYDVHGPVIPMKALEIANALVDVVSKYDHNMKLEAWNILCDVSKFVFSLKHCNHKMFQRFSTKCQSALIDLPISRPLRLNDDSKDEVDIIP</sequence>
<feature type="chain" id="PRO_0000257819" description="Maltose fermentation regulatory protein YPR196W">
    <location>
        <begin position="1"/>
        <end position="470"/>
    </location>
</feature>
<feature type="DNA-binding region" description="Zn(2)-C6 fungal-type" evidence="3">
    <location>
        <begin position="8"/>
        <end position="34"/>
    </location>
</feature>
<feature type="short sequence motif" description="Nuclear localization signal" evidence="2">
    <location>
        <begin position="41"/>
        <end position="49"/>
    </location>
</feature>
<keyword id="KW-0238">DNA-binding</keyword>
<keyword id="KW-0479">Metal-binding</keyword>
<keyword id="KW-0539">Nucleus</keyword>
<keyword id="KW-1185">Reference proteome</keyword>
<keyword id="KW-0804">Transcription</keyword>
<keyword id="KW-0805">Transcription regulation</keyword>
<keyword id="KW-0862">Zinc</keyword>